<keyword id="KW-0067">ATP-binding</keyword>
<keyword id="KW-0143">Chaperone</keyword>
<keyword id="KW-0479">Metal-binding</keyword>
<keyword id="KW-0547">Nucleotide-binding</keyword>
<keyword id="KW-1185">Reference proteome</keyword>
<keyword id="KW-0862">Zinc</keyword>
<accession>A5N2K7</accession>
<protein>
    <recommendedName>
        <fullName evidence="1">ATP-dependent Clp protease ATP-binding subunit ClpX</fullName>
    </recommendedName>
</protein>
<name>CLPX_CLOK5</name>
<sequence length="430" mass="47814">MAKNDDKKQLKCSFCGKTQDQVRRLIAGPGVYICDECIELCSEIISDEFEEDIQIDMTSIPKPVEIKNYLDQYVIGQEDSKKSLSVAVYNHYKRINSNNNSNDDVELQKSNILLLGPTGSGKTLLAQTLARFLNVPFAIADATTLTEAGYVGEDVENILLKLIQNADYDIERAEHGIVYIDEIDKIARKSENPSITRDVSGEGVQQALLKILEGTVASVPPQGGRKHPHQEFIQINTTNILFICGGAFDGIDSIIERRTRVSTLGFGAEIQSKKDKDIGKLLKQIMPGDLLKFGLIPEFVGRIPIIVTLEALDRAALISILKEPKNALVKQYKKLFELDDVELEFKDEALEAIADEALKRNTGARGLRAIIEETMKDVMFDIPSKEEIAKVIINKDAVSTKMPELIEAENGKRTPIKLKKSRTRKGPETA</sequence>
<gene>
    <name evidence="1" type="primary">clpX</name>
    <name type="ordered locus">CKL_3350</name>
</gene>
<dbReference type="EMBL" id="CP000673">
    <property type="protein sequence ID" value="EDK35353.1"/>
    <property type="molecule type" value="Genomic_DNA"/>
</dbReference>
<dbReference type="RefSeq" id="WP_012103683.1">
    <property type="nucleotide sequence ID" value="NC_009706.1"/>
</dbReference>
<dbReference type="SMR" id="A5N2K7"/>
<dbReference type="STRING" id="431943.CKL_3350"/>
<dbReference type="KEGG" id="ckl:CKL_3350"/>
<dbReference type="eggNOG" id="COG1219">
    <property type="taxonomic scope" value="Bacteria"/>
</dbReference>
<dbReference type="HOGENOM" id="CLU_014218_8_2_9"/>
<dbReference type="Proteomes" id="UP000002411">
    <property type="component" value="Chromosome"/>
</dbReference>
<dbReference type="GO" id="GO:0009376">
    <property type="term" value="C:HslUV protease complex"/>
    <property type="evidence" value="ECO:0007669"/>
    <property type="project" value="TreeGrafter"/>
</dbReference>
<dbReference type="GO" id="GO:0005524">
    <property type="term" value="F:ATP binding"/>
    <property type="evidence" value="ECO:0007669"/>
    <property type="project" value="UniProtKB-UniRule"/>
</dbReference>
<dbReference type="GO" id="GO:0016887">
    <property type="term" value="F:ATP hydrolysis activity"/>
    <property type="evidence" value="ECO:0007669"/>
    <property type="project" value="InterPro"/>
</dbReference>
<dbReference type="GO" id="GO:0140662">
    <property type="term" value="F:ATP-dependent protein folding chaperone"/>
    <property type="evidence" value="ECO:0007669"/>
    <property type="project" value="InterPro"/>
</dbReference>
<dbReference type="GO" id="GO:0046983">
    <property type="term" value="F:protein dimerization activity"/>
    <property type="evidence" value="ECO:0007669"/>
    <property type="project" value="InterPro"/>
</dbReference>
<dbReference type="GO" id="GO:0051082">
    <property type="term" value="F:unfolded protein binding"/>
    <property type="evidence" value="ECO:0007669"/>
    <property type="project" value="UniProtKB-UniRule"/>
</dbReference>
<dbReference type="GO" id="GO:0008270">
    <property type="term" value="F:zinc ion binding"/>
    <property type="evidence" value="ECO:0007669"/>
    <property type="project" value="InterPro"/>
</dbReference>
<dbReference type="GO" id="GO:0051301">
    <property type="term" value="P:cell division"/>
    <property type="evidence" value="ECO:0007669"/>
    <property type="project" value="TreeGrafter"/>
</dbReference>
<dbReference type="GO" id="GO:0051603">
    <property type="term" value="P:proteolysis involved in protein catabolic process"/>
    <property type="evidence" value="ECO:0007669"/>
    <property type="project" value="TreeGrafter"/>
</dbReference>
<dbReference type="CDD" id="cd19497">
    <property type="entry name" value="RecA-like_ClpX"/>
    <property type="match status" value="1"/>
</dbReference>
<dbReference type="FunFam" id="1.10.8.60:FF:000002">
    <property type="entry name" value="ATP-dependent Clp protease ATP-binding subunit ClpX"/>
    <property type="match status" value="1"/>
</dbReference>
<dbReference type="FunFam" id="3.40.50.300:FF:000005">
    <property type="entry name" value="ATP-dependent Clp protease ATP-binding subunit ClpX"/>
    <property type="match status" value="1"/>
</dbReference>
<dbReference type="Gene3D" id="1.10.8.60">
    <property type="match status" value="1"/>
</dbReference>
<dbReference type="Gene3D" id="6.20.220.10">
    <property type="entry name" value="ClpX chaperone, C4-type zinc finger domain"/>
    <property type="match status" value="1"/>
</dbReference>
<dbReference type="Gene3D" id="3.40.50.300">
    <property type="entry name" value="P-loop containing nucleotide triphosphate hydrolases"/>
    <property type="match status" value="1"/>
</dbReference>
<dbReference type="HAMAP" id="MF_00175">
    <property type="entry name" value="ClpX"/>
    <property type="match status" value="1"/>
</dbReference>
<dbReference type="InterPro" id="IPR003593">
    <property type="entry name" value="AAA+_ATPase"/>
</dbReference>
<dbReference type="InterPro" id="IPR050052">
    <property type="entry name" value="ATP-dep_Clp_protease_ClpX"/>
</dbReference>
<dbReference type="InterPro" id="IPR003959">
    <property type="entry name" value="ATPase_AAA_core"/>
</dbReference>
<dbReference type="InterPro" id="IPR019489">
    <property type="entry name" value="Clp_ATPase_C"/>
</dbReference>
<dbReference type="InterPro" id="IPR004487">
    <property type="entry name" value="Clp_protease_ATP-bd_su_ClpX"/>
</dbReference>
<dbReference type="InterPro" id="IPR046425">
    <property type="entry name" value="ClpX_bact"/>
</dbReference>
<dbReference type="InterPro" id="IPR027417">
    <property type="entry name" value="P-loop_NTPase"/>
</dbReference>
<dbReference type="InterPro" id="IPR010603">
    <property type="entry name" value="Znf_CppX_C4"/>
</dbReference>
<dbReference type="InterPro" id="IPR038366">
    <property type="entry name" value="Znf_CppX_C4_sf"/>
</dbReference>
<dbReference type="NCBIfam" id="TIGR00382">
    <property type="entry name" value="clpX"/>
    <property type="match status" value="1"/>
</dbReference>
<dbReference type="NCBIfam" id="NF003745">
    <property type="entry name" value="PRK05342.1"/>
    <property type="match status" value="1"/>
</dbReference>
<dbReference type="PANTHER" id="PTHR48102:SF7">
    <property type="entry name" value="ATP-DEPENDENT CLP PROTEASE ATP-BINDING SUBUNIT CLPX-LIKE, MITOCHONDRIAL"/>
    <property type="match status" value="1"/>
</dbReference>
<dbReference type="PANTHER" id="PTHR48102">
    <property type="entry name" value="ATP-DEPENDENT CLP PROTEASE ATP-BINDING SUBUNIT CLPX-LIKE, MITOCHONDRIAL-RELATED"/>
    <property type="match status" value="1"/>
</dbReference>
<dbReference type="Pfam" id="PF07724">
    <property type="entry name" value="AAA_2"/>
    <property type="match status" value="1"/>
</dbReference>
<dbReference type="Pfam" id="PF10431">
    <property type="entry name" value="ClpB_D2-small"/>
    <property type="match status" value="1"/>
</dbReference>
<dbReference type="Pfam" id="PF06689">
    <property type="entry name" value="zf-C4_ClpX"/>
    <property type="match status" value="1"/>
</dbReference>
<dbReference type="SMART" id="SM00382">
    <property type="entry name" value="AAA"/>
    <property type="match status" value="1"/>
</dbReference>
<dbReference type="SMART" id="SM01086">
    <property type="entry name" value="ClpB_D2-small"/>
    <property type="match status" value="1"/>
</dbReference>
<dbReference type="SMART" id="SM00994">
    <property type="entry name" value="zf-C4_ClpX"/>
    <property type="match status" value="1"/>
</dbReference>
<dbReference type="SUPFAM" id="SSF57716">
    <property type="entry name" value="Glucocorticoid receptor-like (DNA-binding domain)"/>
    <property type="match status" value="1"/>
</dbReference>
<dbReference type="SUPFAM" id="SSF52540">
    <property type="entry name" value="P-loop containing nucleoside triphosphate hydrolases"/>
    <property type="match status" value="1"/>
</dbReference>
<dbReference type="PROSITE" id="PS51902">
    <property type="entry name" value="CLPX_ZB"/>
    <property type="match status" value="1"/>
</dbReference>
<feature type="chain" id="PRO_1000077150" description="ATP-dependent Clp protease ATP-binding subunit ClpX">
    <location>
        <begin position="1"/>
        <end position="430"/>
    </location>
</feature>
<feature type="domain" description="ClpX-type ZB" evidence="2">
    <location>
        <begin position="1"/>
        <end position="53"/>
    </location>
</feature>
<feature type="region of interest" description="Disordered" evidence="3">
    <location>
        <begin position="409"/>
        <end position="430"/>
    </location>
</feature>
<feature type="compositionally biased region" description="Basic residues" evidence="3">
    <location>
        <begin position="414"/>
        <end position="424"/>
    </location>
</feature>
<feature type="binding site" evidence="2">
    <location>
        <position position="12"/>
    </location>
    <ligand>
        <name>Zn(2+)</name>
        <dbReference type="ChEBI" id="CHEBI:29105"/>
    </ligand>
</feature>
<feature type="binding site" evidence="2">
    <location>
        <position position="15"/>
    </location>
    <ligand>
        <name>Zn(2+)</name>
        <dbReference type="ChEBI" id="CHEBI:29105"/>
    </ligand>
</feature>
<feature type="binding site" evidence="2">
    <location>
        <position position="34"/>
    </location>
    <ligand>
        <name>Zn(2+)</name>
        <dbReference type="ChEBI" id="CHEBI:29105"/>
    </ligand>
</feature>
<feature type="binding site" evidence="2">
    <location>
        <position position="37"/>
    </location>
    <ligand>
        <name>Zn(2+)</name>
        <dbReference type="ChEBI" id="CHEBI:29105"/>
    </ligand>
</feature>
<feature type="binding site" evidence="1">
    <location>
        <begin position="117"/>
        <end position="124"/>
    </location>
    <ligand>
        <name>ATP</name>
        <dbReference type="ChEBI" id="CHEBI:30616"/>
    </ligand>
</feature>
<reference key="1">
    <citation type="journal article" date="2008" name="Proc. Natl. Acad. Sci. U.S.A.">
        <title>The genome of Clostridium kluyveri, a strict anaerobe with unique metabolic features.</title>
        <authorList>
            <person name="Seedorf H."/>
            <person name="Fricke W.F."/>
            <person name="Veith B."/>
            <person name="Brueggemann H."/>
            <person name="Liesegang H."/>
            <person name="Strittmatter A."/>
            <person name="Miethke M."/>
            <person name="Buckel W."/>
            <person name="Hinderberger J."/>
            <person name="Li F."/>
            <person name="Hagemeier C."/>
            <person name="Thauer R.K."/>
            <person name="Gottschalk G."/>
        </authorList>
    </citation>
    <scope>NUCLEOTIDE SEQUENCE [LARGE SCALE GENOMIC DNA]</scope>
    <source>
        <strain>ATCC 8527 / DSM 555 / NBRC 12016 / NCIMB 10680 / K1</strain>
    </source>
</reference>
<proteinExistence type="inferred from homology"/>
<organism>
    <name type="scientific">Clostridium kluyveri (strain ATCC 8527 / DSM 555 / NBRC 12016 / NCIMB 10680 / K1)</name>
    <dbReference type="NCBI Taxonomy" id="431943"/>
    <lineage>
        <taxon>Bacteria</taxon>
        <taxon>Bacillati</taxon>
        <taxon>Bacillota</taxon>
        <taxon>Clostridia</taxon>
        <taxon>Eubacteriales</taxon>
        <taxon>Clostridiaceae</taxon>
        <taxon>Clostridium</taxon>
    </lineage>
</organism>
<comment type="function">
    <text evidence="1">ATP-dependent specificity component of the Clp protease. It directs the protease to specific substrates. Can perform chaperone functions in the absence of ClpP.</text>
</comment>
<comment type="subunit">
    <text evidence="1">Component of the ClpX-ClpP complex. Forms a hexameric ring that, in the presence of ATP, binds to fourteen ClpP subunits assembled into a disk-like structure with a central cavity, resembling the structure of eukaryotic proteasomes.</text>
</comment>
<comment type="similarity">
    <text evidence="1">Belongs to the ClpX chaperone family.</text>
</comment>
<evidence type="ECO:0000255" key="1">
    <source>
        <dbReference type="HAMAP-Rule" id="MF_00175"/>
    </source>
</evidence>
<evidence type="ECO:0000255" key="2">
    <source>
        <dbReference type="PROSITE-ProRule" id="PRU01250"/>
    </source>
</evidence>
<evidence type="ECO:0000256" key="3">
    <source>
        <dbReference type="SAM" id="MobiDB-lite"/>
    </source>
</evidence>